<accession>Q58DA6</accession>
<keyword id="KW-0050">Antiport</keyword>
<keyword id="KW-0333">Golgi apparatus</keyword>
<keyword id="KW-0472">Membrane</keyword>
<keyword id="KW-1185">Reference proteome</keyword>
<keyword id="KW-0762">Sugar transport</keyword>
<keyword id="KW-0812">Transmembrane</keyword>
<keyword id="KW-1133">Transmembrane helix</keyword>
<keyword id="KW-0813">Transport</keyword>
<organism>
    <name type="scientific">Bos taurus</name>
    <name type="common">Bovine</name>
    <dbReference type="NCBI Taxonomy" id="9913"/>
    <lineage>
        <taxon>Eukaryota</taxon>
        <taxon>Metazoa</taxon>
        <taxon>Chordata</taxon>
        <taxon>Craniata</taxon>
        <taxon>Vertebrata</taxon>
        <taxon>Euteleostomi</taxon>
        <taxon>Mammalia</taxon>
        <taxon>Eutheria</taxon>
        <taxon>Laurasiatheria</taxon>
        <taxon>Artiodactyla</taxon>
        <taxon>Ruminantia</taxon>
        <taxon>Pecora</taxon>
        <taxon>Bovidae</taxon>
        <taxon>Bovinae</taxon>
        <taxon>Bos</taxon>
    </lineage>
</organism>
<feature type="chain" id="PRO_0000239113" description="UDP-galactose translocator">
    <location>
        <begin position="1"/>
        <end position="393"/>
    </location>
</feature>
<feature type="transmembrane region" description="Helical" evidence="2">
    <location>
        <begin position="3"/>
        <end position="23"/>
    </location>
</feature>
<feature type="transmembrane region" description="Helical" evidence="2">
    <location>
        <begin position="37"/>
        <end position="57"/>
    </location>
</feature>
<feature type="transmembrane region" description="Helical" evidence="2">
    <location>
        <begin position="65"/>
        <end position="85"/>
    </location>
</feature>
<feature type="transmembrane region" description="Helical" evidence="2">
    <location>
        <begin position="97"/>
        <end position="117"/>
    </location>
</feature>
<feature type="transmembrane region" description="Helical" evidence="2">
    <location>
        <begin position="140"/>
        <end position="160"/>
    </location>
</feature>
<feature type="transmembrane region" description="Helical" evidence="2">
    <location>
        <begin position="169"/>
        <end position="189"/>
    </location>
</feature>
<feature type="transmembrane region" description="Helical" evidence="2">
    <location>
        <begin position="200"/>
        <end position="220"/>
    </location>
</feature>
<feature type="transmembrane region" description="Helical" evidence="2">
    <location>
        <begin position="238"/>
        <end position="258"/>
    </location>
</feature>
<feature type="transmembrane region" description="Helical" evidence="2">
    <location>
        <begin position="269"/>
        <end position="289"/>
    </location>
</feature>
<feature type="transmembrane region" description="Helical" evidence="2">
    <location>
        <begin position="315"/>
        <end position="335"/>
    </location>
</feature>
<feature type="region of interest" description="Disordered" evidence="3">
    <location>
        <begin position="353"/>
        <end position="393"/>
    </location>
</feature>
<comment type="function">
    <text evidence="1">Transports uridine diphosphate galactose (UDP-galactose) from the cytosol into the Golgi apparatus, functioning as an antiporter that exchanges UDP-galactose for UMP. It is also able to exchange UDP-galactose for AMP and CMP, and to transport UDP-N-acetylgalactosamine (UDP-GalNAc) and other nucleotide sugars. As a provider of UDP-galactose to galactosyltransferases present in the Golgi apparatus, it is necessary for globotriaosylceramide/globoside (Gb3Cer) synthesis from lactosylceramide.</text>
</comment>
<comment type="catalytic activity">
    <reaction evidence="1">
        <text>UMP(out) + UDP-alpha-D-galactose(in) = UMP(in) + UDP-alpha-D-galactose(out)</text>
        <dbReference type="Rhea" id="RHEA:72703"/>
        <dbReference type="ChEBI" id="CHEBI:57865"/>
        <dbReference type="ChEBI" id="CHEBI:66914"/>
    </reaction>
</comment>
<comment type="catalytic activity">
    <reaction evidence="1">
        <text>UDP-N-acetyl-alpha-D-galactosamine(in) + UMP(out) = UDP-N-acetyl-alpha-D-galactosamine(out) + UMP(in)</text>
        <dbReference type="Rhea" id="RHEA:72735"/>
        <dbReference type="ChEBI" id="CHEBI:57865"/>
        <dbReference type="ChEBI" id="CHEBI:67138"/>
    </reaction>
</comment>
<comment type="catalytic activity">
    <reaction evidence="1">
        <text>UMP(out) + UDP-alpha-D-glucose(in) = UMP(in) + UDP-alpha-D-glucose(out)</text>
        <dbReference type="Rhea" id="RHEA:72731"/>
        <dbReference type="ChEBI" id="CHEBI:57865"/>
        <dbReference type="ChEBI" id="CHEBI:58885"/>
    </reaction>
</comment>
<comment type="catalytic activity">
    <reaction evidence="1">
        <text>UMP(out) + UDP-N-acetyl-alpha-D-glucosamine(in) = UMP(in) + UDP-N-acetyl-alpha-D-glucosamine(out)</text>
        <dbReference type="Rhea" id="RHEA:72695"/>
        <dbReference type="ChEBI" id="CHEBI:57705"/>
        <dbReference type="ChEBI" id="CHEBI:57865"/>
    </reaction>
</comment>
<comment type="catalytic activity">
    <reaction evidence="1">
        <text>UDP-alpha-D-galactose(in) + AMP(out) = UDP-alpha-D-galactose(out) + AMP(in)</text>
        <dbReference type="Rhea" id="RHEA:74599"/>
        <dbReference type="ChEBI" id="CHEBI:66914"/>
        <dbReference type="ChEBI" id="CHEBI:456215"/>
    </reaction>
</comment>
<comment type="catalytic activity">
    <reaction evidence="1">
        <text>UDP-alpha-D-galactose(in) + CMP(out) = UDP-alpha-D-galactose(out) + CMP(in)</text>
        <dbReference type="Rhea" id="RHEA:74603"/>
        <dbReference type="ChEBI" id="CHEBI:60377"/>
        <dbReference type="ChEBI" id="CHEBI:66914"/>
    </reaction>
</comment>
<comment type="catalytic activity">
    <reaction evidence="1">
        <text>UDP-N-acetyl-alpha-D-galactosamine(out) + UDP-alpha-D-galactose(in) = UDP-N-acetyl-alpha-D-galactosamine(in) + UDP-alpha-D-galactose(out)</text>
        <dbReference type="Rhea" id="RHEA:74607"/>
        <dbReference type="ChEBI" id="CHEBI:66914"/>
        <dbReference type="ChEBI" id="CHEBI:67138"/>
    </reaction>
</comment>
<comment type="catalytic activity">
    <reaction evidence="1">
        <text>UDP-N-acetyl-alpha-D-glucosamine(out) + UDP-alpha-D-galactose(in) = UDP-N-acetyl-alpha-D-glucosamine(in) + UDP-alpha-D-galactose(out)</text>
        <dbReference type="Rhea" id="RHEA:74611"/>
        <dbReference type="ChEBI" id="CHEBI:57705"/>
        <dbReference type="ChEBI" id="CHEBI:66914"/>
    </reaction>
</comment>
<comment type="catalytic activity">
    <reaction evidence="1">
        <text>UDP-alpha-D-galactose(in) + UDP-alpha-D-glucose(out) = UDP-alpha-D-galactose(out) + UDP-alpha-D-glucose(in)</text>
        <dbReference type="Rhea" id="RHEA:74615"/>
        <dbReference type="ChEBI" id="CHEBI:58885"/>
        <dbReference type="ChEBI" id="CHEBI:66914"/>
    </reaction>
</comment>
<comment type="catalytic activity">
    <reaction evidence="1">
        <text>UMP(out) + CMP(in) = UMP(in) + CMP(out)</text>
        <dbReference type="Rhea" id="RHEA:74619"/>
        <dbReference type="ChEBI" id="CHEBI:57865"/>
        <dbReference type="ChEBI" id="CHEBI:60377"/>
    </reaction>
</comment>
<comment type="catalytic activity">
    <reaction evidence="1">
        <text>UMP(out) + AMP(in) = UMP(in) + AMP(out)</text>
        <dbReference type="Rhea" id="RHEA:74623"/>
        <dbReference type="ChEBI" id="CHEBI:57865"/>
        <dbReference type="ChEBI" id="CHEBI:456215"/>
    </reaction>
</comment>
<comment type="subunit">
    <text evidence="1">Interacts with SLC35A3; the interaction is reduced in the presence of SLC35A4 (By similarity). Found in a complex with SLC35A3 and SLC35A4 (By similarity).</text>
</comment>
<comment type="subcellular location">
    <subcellularLocation>
        <location evidence="1">Golgi apparatus membrane</location>
        <topology evidence="2">Multi-pass membrane protein</topology>
    </subcellularLocation>
</comment>
<comment type="similarity">
    <text evidence="4">Belongs to the nucleotide-sugar transporter family. SLC35A subfamily.</text>
</comment>
<proteinExistence type="evidence at transcript level"/>
<name>S35A2_BOVIN</name>
<sequence length="393" mass="41180">MAAVGSGGSTATAGPGAVSAGALEPGTSSAAHRRLKYISLAVLVVQNASLILSIRYARTLPGDRFFATTAVVMAEVLKGLTCLLLLFAQKRGNVKHLVLFLHEAVLVQYMDTLKLAVPSLIYTLQNNLQYIAISNLPAATFQVTYQLKILTTALFSVLMLNRSLSRLQWASLLLLFTGVAIVQAQQAGGGGPRPLDQNPGVGLAAVVASCLSSGFAGVYFEKILKGSSGSVWLRNLQLGLFGTALGLVGLWWAEGTAVTHRGFFFGYTPAVWGVVLNQAFGGLLVAVVVKYADNILKGFATSLSIVLSTVASIRLFGFHVDPLFALGAGLVIGAVYLYSLPRGAAKAIASASAPTSGPCTHQQPPGQPPPPQLSSHHGDLSTEPFLPKSVLVK</sequence>
<reference key="1">
    <citation type="journal article" date="2005" name="BMC Genomics">
        <title>Characterization of 954 bovine full-CDS cDNA sequences.</title>
        <authorList>
            <person name="Harhay G.P."/>
            <person name="Sonstegard T.S."/>
            <person name="Keele J.W."/>
            <person name="Heaton M.P."/>
            <person name="Clawson M.L."/>
            <person name="Snelling W.M."/>
            <person name="Wiedmann R.T."/>
            <person name="Van Tassell C.P."/>
            <person name="Smith T.P.L."/>
        </authorList>
    </citation>
    <scope>NUCLEOTIDE SEQUENCE [LARGE SCALE MRNA]</scope>
</reference>
<evidence type="ECO:0000250" key="1">
    <source>
        <dbReference type="UniProtKB" id="P78381"/>
    </source>
</evidence>
<evidence type="ECO:0000255" key="2"/>
<evidence type="ECO:0000256" key="3">
    <source>
        <dbReference type="SAM" id="MobiDB-lite"/>
    </source>
</evidence>
<evidence type="ECO:0000305" key="4"/>
<dbReference type="EMBL" id="BT021691">
    <property type="protein sequence ID" value="AAX46538.1"/>
    <property type="molecule type" value="mRNA"/>
</dbReference>
<dbReference type="SMR" id="Q58DA6"/>
<dbReference type="FunCoup" id="Q58DA6">
    <property type="interactions" value="1503"/>
</dbReference>
<dbReference type="STRING" id="9913.ENSBTAP00000003591"/>
<dbReference type="PaxDb" id="9913-ENSBTAP00000003591"/>
<dbReference type="eggNOG" id="KOG2234">
    <property type="taxonomic scope" value="Eukaryota"/>
</dbReference>
<dbReference type="InParanoid" id="Q58DA6"/>
<dbReference type="OrthoDB" id="408493at2759"/>
<dbReference type="Proteomes" id="UP000009136">
    <property type="component" value="Unplaced"/>
</dbReference>
<dbReference type="GO" id="GO:0000139">
    <property type="term" value="C:Golgi membrane"/>
    <property type="evidence" value="ECO:0000250"/>
    <property type="project" value="UniProtKB"/>
</dbReference>
<dbReference type="GO" id="GO:0015297">
    <property type="term" value="F:antiporter activity"/>
    <property type="evidence" value="ECO:0007669"/>
    <property type="project" value="UniProtKB-KW"/>
</dbReference>
<dbReference type="GO" id="GO:0005459">
    <property type="term" value="F:UDP-galactose transmembrane transporter activity"/>
    <property type="evidence" value="ECO:0000318"/>
    <property type="project" value="GO_Central"/>
</dbReference>
<dbReference type="GO" id="GO:0072334">
    <property type="term" value="P:UDP-galactose transmembrane transport"/>
    <property type="evidence" value="ECO:0000318"/>
    <property type="project" value="GO_Central"/>
</dbReference>
<dbReference type="InterPro" id="IPR007271">
    <property type="entry name" value="Nuc_sug_transpt"/>
</dbReference>
<dbReference type="NCBIfam" id="TIGR00803">
    <property type="entry name" value="nst"/>
    <property type="match status" value="1"/>
</dbReference>
<dbReference type="PANTHER" id="PTHR10231">
    <property type="entry name" value="NUCLEOTIDE-SUGAR TRANSMEMBRANE TRANSPORTER"/>
    <property type="match status" value="1"/>
</dbReference>
<dbReference type="Pfam" id="PF04142">
    <property type="entry name" value="Nuc_sug_transp"/>
    <property type="match status" value="1"/>
</dbReference>
<dbReference type="PIRSF" id="PIRSF005799">
    <property type="entry name" value="UDP-gal_transpt"/>
    <property type="match status" value="1"/>
</dbReference>
<dbReference type="SUPFAM" id="SSF103481">
    <property type="entry name" value="Multidrug resistance efflux transporter EmrE"/>
    <property type="match status" value="1"/>
</dbReference>
<gene>
    <name evidence="1" type="primary">SLC35A2</name>
</gene>
<protein>
    <recommendedName>
        <fullName evidence="1">UDP-galactose translocator</fullName>
    </recommendedName>
    <alternativeName>
        <fullName evidence="1">Solute carrier family 35 member A2</fullName>
    </alternativeName>
    <alternativeName>
        <fullName>UDP-galactose transporter</fullName>
        <shortName>UDP-Gal-Tr</shortName>
        <shortName>UGT</shortName>
    </alternativeName>
</protein>